<keyword id="KW-0408">Iron</keyword>
<keyword id="KW-0456">Lyase</keyword>
<keyword id="KW-0464">Manganese</keyword>
<keyword id="KW-1185">Reference proteome</keyword>
<evidence type="ECO:0000255" key="1">
    <source>
        <dbReference type="HAMAP-Rule" id="MF_00106"/>
    </source>
</evidence>
<organism>
    <name type="scientific">Tolumonas auensis (strain DSM 9187 / NBRC 110442 / TA 4)</name>
    <dbReference type="NCBI Taxonomy" id="595494"/>
    <lineage>
        <taxon>Bacteria</taxon>
        <taxon>Pseudomonadati</taxon>
        <taxon>Pseudomonadota</taxon>
        <taxon>Gammaproteobacteria</taxon>
        <taxon>Aeromonadales</taxon>
        <taxon>Aeromonadaceae</taxon>
        <taxon>Tolumonas</taxon>
    </lineage>
</organism>
<protein>
    <recommendedName>
        <fullName evidence="1">Mannonate dehydratase</fullName>
        <ecNumber evidence="1">4.2.1.8</ecNumber>
    </recommendedName>
    <alternativeName>
        <fullName evidence="1">D-mannonate hydro-lyase</fullName>
    </alternativeName>
</protein>
<reference key="1">
    <citation type="submission" date="2009-05" db="EMBL/GenBank/DDBJ databases">
        <title>Complete sequence of Tolumonas auensis DSM 9187.</title>
        <authorList>
            <consortium name="US DOE Joint Genome Institute"/>
            <person name="Lucas S."/>
            <person name="Copeland A."/>
            <person name="Lapidus A."/>
            <person name="Glavina del Rio T."/>
            <person name="Tice H."/>
            <person name="Bruce D."/>
            <person name="Goodwin L."/>
            <person name="Pitluck S."/>
            <person name="Chertkov O."/>
            <person name="Brettin T."/>
            <person name="Detter J.C."/>
            <person name="Han C."/>
            <person name="Larimer F."/>
            <person name="Land M."/>
            <person name="Hauser L."/>
            <person name="Kyrpides N."/>
            <person name="Mikhailova N."/>
            <person name="Spring S."/>
            <person name="Beller H."/>
        </authorList>
    </citation>
    <scope>NUCLEOTIDE SEQUENCE [LARGE SCALE GENOMIC DNA]</scope>
    <source>
        <strain>DSM 9187 / NBRC 110442 / TA 4</strain>
    </source>
</reference>
<comment type="function">
    <text evidence="1">Catalyzes the dehydration of D-mannonate.</text>
</comment>
<comment type="catalytic activity">
    <reaction evidence="1">
        <text>D-mannonate = 2-dehydro-3-deoxy-D-gluconate + H2O</text>
        <dbReference type="Rhea" id="RHEA:20097"/>
        <dbReference type="ChEBI" id="CHEBI:15377"/>
        <dbReference type="ChEBI" id="CHEBI:17767"/>
        <dbReference type="ChEBI" id="CHEBI:57990"/>
        <dbReference type="EC" id="4.2.1.8"/>
    </reaction>
</comment>
<comment type="cofactor">
    <cofactor evidence="1">
        <name>Fe(2+)</name>
        <dbReference type="ChEBI" id="CHEBI:29033"/>
    </cofactor>
    <cofactor evidence="1">
        <name>Mn(2+)</name>
        <dbReference type="ChEBI" id="CHEBI:29035"/>
    </cofactor>
</comment>
<comment type="pathway">
    <text evidence="1">Carbohydrate metabolism; pentose and glucuronate interconversion.</text>
</comment>
<comment type="similarity">
    <text evidence="1">Belongs to the mannonate dehydratase family.</text>
</comment>
<dbReference type="EC" id="4.2.1.8" evidence="1"/>
<dbReference type="EMBL" id="CP001616">
    <property type="protein sequence ID" value="ACQ94475.1"/>
    <property type="molecule type" value="Genomic_DNA"/>
</dbReference>
<dbReference type="RefSeq" id="WP_015879924.1">
    <property type="nucleotide sequence ID" value="NC_012691.1"/>
</dbReference>
<dbReference type="SMR" id="C4LCH1"/>
<dbReference type="STRING" id="595494.Tola_2884"/>
<dbReference type="KEGG" id="tau:Tola_2884"/>
<dbReference type="eggNOG" id="COG1312">
    <property type="taxonomic scope" value="Bacteria"/>
</dbReference>
<dbReference type="HOGENOM" id="CLU_058621_2_0_6"/>
<dbReference type="OrthoDB" id="9780250at2"/>
<dbReference type="UniPathway" id="UPA00246"/>
<dbReference type="Proteomes" id="UP000009073">
    <property type="component" value="Chromosome"/>
</dbReference>
<dbReference type="GO" id="GO:0008198">
    <property type="term" value="F:ferrous iron binding"/>
    <property type="evidence" value="ECO:0007669"/>
    <property type="project" value="TreeGrafter"/>
</dbReference>
<dbReference type="GO" id="GO:0030145">
    <property type="term" value="F:manganese ion binding"/>
    <property type="evidence" value="ECO:0007669"/>
    <property type="project" value="TreeGrafter"/>
</dbReference>
<dbReference type="GO" id="GO:0008927">
    <property type="term" value="F:mannonate dehydratase activity"/>
    <property type="evidence" value="ECO:0007669"/>
    <property type="project" value="UniProtKB-UniRule"/>
</dbReference>
<dbReference type="GO" id="GO:0042840">
    <property type="term" value="P:D-glucuronate catabolic process"/>
    <property type="evidence" value="ECO:0007669"/>
    <property type="project" value="TreeGrafter"/>
</dbReference>
<dbReference type="FunFam" id="3.20.20.150:FF:000004">
    <property type="entry name" value="Mannonate dehydratase"/>
    <property type="match status" value="1"/>
</dbReference>
<dbReference type="FunFam" id="3.20.20.150:FF:000005">
    <property type="entry name" value="Mannonate dehydratase"/>
    <property type="match status" value="1"/>
</dbReference>
<dbReference type="Gene3D" id="3.20.20.150">
    <property type="entry name" value="Divalent-metal-dependent TIM barrel enzymes"/>
    <property type="match status" value="2"/>
</dbReference>
<dbReference type="HAMAP" id="MF_00106">
    <property type="entry name" value="UxuA"/>
    <property type="match status" value="1"/>
</dbReference>
<dbReference type="InterPro" id="IPR004628">
    <property type="entry name" value="Man_deHydtase"/>
</dbReference>
<dbReference type="InterPro" id="IPR036237">
    <property type="entry name" value="Xyl_isomerase-like_sf"/>
</dbReference>
<dbReference type="NCBIfam" id="NF003027">
    <property type="entry name" value="PRK03906.1"/>
    <property type="match status" value="1"/>
</dbReference>
<dbReference type="NCBIfam" id="TIGR00695">
    <property type="entry name" value="uxuA"/>
    <property type="match status" value="1"/>
</dbReference>
<dbReference type="PANTHER" id="PTHR30387">
    <property type="entry name" value="MANNONATE DEHYDRATASE"/>
    <property type="match status" value="1"/>
</dbReference>
<dbReference type="PANTHER" id="PTHR30387:SF2">
    <property type="entry name" value="MANNONATE DEHYDRATASE"/>
    <property type="match status" value="1"/>
</dbReference>
<dbReference type="Pfam" id="PF03786">
    <property type="entry name" value="UxuA"/>
    <property type="match status" value="1"/>
</dbReference>
<dbReference type="PIRSF" id="PIRSF016049">
    <property type="entry name" value="Man_dehyd"/>
    <property type="match status" value="1"/>
</dbReference>
<dbReference type="SUPFAM" id="SSF51658">
    <property type="entry name" value="Xylose isomerase-like"/>
    <property type="match status" value="1"/>
</dbReference>
<feature type="chain" id="PRO_1000202871" description="Mannonate dehydratase">
    <location>
        <begin position="1"/>
        <end position="393"/>
    </location>
</feature>
<sequence>MEQTWRWYGPNDPVSLSDVRQAGATGVVNALHHIPNGQVWPVEEILARKAIIEAAGLTWSVVESVPIHEDIKTQTGDYLKYIENYKQTLRNLAQCGIHTVCYNFMPVLDWTRTDLEYVMPDGSKALRFDQIEFAAFELHILKRPGAEADYTAEEVEQANARFAAMTDAEKARLTRNIIAGLPGAEEGYTIEQFRARLADYDGIDKAKLREHFAFFLKNIIPVAEQVGLRMAVHPDDPPRPILGLPRIVSTIEDMQWMVETVDSIANGFTMCTGSYGVRGDNDLVAMIKRFGNRIYFTHLRSTCREENPKTFHEAAHLGGDVDMYNVVKAILEEEYRRKQEGHPLLIPMRPDHGHQMLDDLKKKTNPGYSAIGRLKGLAEVRGVELALKRAFFE</sequence>
<accession>C4LCH1</accession>
<gene>
    <name evidence="1" type="primary">uxuA</name>
    <name type="ordered locus">Tola_2884</name>
</gene>
<name>UXUA_TOLAT</name>
<proteinExistence type="inferred from homology"/>